<gene>
    <name evidence="1" type="primary">argR</name>
    <name type="ordered locus">MAP_1366</name>
</gene>
<reference key="1">
    <citation type="journal article" date="2005" name="Proc. Natl. Acad. Sci. U.S.A.">
        <title>The complete genome sequence of Mycobacterium avium subspecies paratuberculosis.</title>
        <authorList>
            <person name="Li L."/>
            <person name="Bannantine J.P."/>
            <person name="Zhang Q."/>
            <person name="Amonsin A."/>
            <person name="May B.J."/>
            <person name="Alt D."/>
            <person name="Banerji N."/>
            <person name="Kanjilal S."/>
            <person name="Kapur V."/>
        </authorList>
    </citation>
    <scope>NUCLEOTIDE SEQUENCE [LARGE SCALE GENOMIC DNA]</scope>
    <source>
        <strain>ATCC BAA-968 / K-10</strain>
    </source>
</reference>
<name>ARGR_MYCPA</name>
<protein>
    <recommendedName>
        <fullName evidence="1">Arginine repressor</fullName>
    </recommendedName>
</protein>
<evidence type="ECO:0000255" key="1">
    <source>
        <dbReference type="HAMAP-Rule" id="MF_00173"/>
    </source>
</evidence>
<organism>
    <name type="scientific">Mycolicibacterium paratuberculosis (strain ATCC BAA-968 / K-10)</name>
    <name type="common">Mycobacterium paratuberculosis</name>
    <dbReference type="NCBI Taxonomy" id="262316"/>
    <lineage>
        <taxon>Bacteria</taxon>
        <taxon>Bacillati</taxon>
        <taxon>Actinomycetota</taxon>
        <taxon>Actinomycetes</taxon>
        <taxon>Mycobacteriales</taxon>
        <taxon>Mycobacteriaceae</taxon>
        <taxon>Mycobacterium</taxon>
        <taxon>Mycobacterium avium complex (MAC)</taxon>
    </lineage>
</organism>
<sequence length="164" mass="16898">MTRSKSTTETTRAARQARIVAILSSAQVRSQSELAALLADEGIEVTQATLSRDLEELGAVKLRGADGGVGVYMVPEDGSPVRGVSGGTARLSRLLSELLVSADASANLAVLRTPPGAADYLASAIDRAALPYVVGTIAGDDTVFVAARDPMTGAELADTLEKLT</sequence>
<comment type="function">
    <text evidence="1">Regulates arginine biosynthesis genes.</text>
</comment>
<comment type="pathway">
    <text>Amino-acid biosynthesis; L-arginine biosynthesis [regulation].</text>
</comment>
<comment type="subcellular location">
    <subcellularLocation>
        <location evidence="1">Cytoplasm</location>
    </subcellularLocation>
</comment>
<comment type="similarity">
    <text evidence="1">Belongs to the ArgR family.</text>
</comment>
<proteinExistence type="inferred from homology"/>
<feature type="chain" id="PRO_0000205103" description="Arginine repressor">
    <location>
        <begin position="1"/>
        <end position="164"/>
    </location>
</feature>
<accession>Q740I4</accession>
<keyword id="KW-0028">Amino-acid biosynthesis</keyword>
<keyword id="KW-0055">Arginine biosynthesis</keyword>
<keyword id="KW-0963">Cytoplasm</keyword>
<keyword id="KW-0238">DNA-binding</keyword>
<keyword id="KW-1185">Reference proteome</keyword>
<keyword id="KW-0678">Repressor</keyword>
<keyword id="KW-0804">Transcription</keyword>
<keyword id="KW-0805">Transcription regulation</keyword>
<dbReference type="EMBL" id="AE016958">
    <property type="protein sequence ID" value="AAS03683.1"/>
    <property type="molecule type" value="Genomic_DNA"/>
</dbReference>
<dbReference type="RefSeq" id="WP_003876280.1">
    <property type="nucleotide sequence ID" value="NZ_CP106873.1"/>
</dbReference>
<dbReference type="SMR" id="Q740I4"/>
<dbReference type="STRING" id="262316.MAP_1366"/>
<dbReference type="KEGG" id="mpa:MAP_1366"/>
<dbReference type="eggNOG" id="COG1438">
    <property type="taxonomic scope" value="Bacteria"/>
</dbReference>
<dbReference type="HOGENOM" id="CLU_097103_1_1_11"/>
<dbReference type="UniPathway" id="UPA00068"/>
<dbReference type="Proteomes" id="UP000000580">
    <property type="component" value="Chromosome"/>
</dbReference>
<dbReference type="GO" id="GO:0005737">
    <property type="term" value="C:cytoplasm"/>
    <property type="evidence" value="ECO:0007669"/>
    <property type="project" value="UniProtKB-SubCell"/>
</dbReference>
<dbReference type="GO" id="GO:0034618">
    <property type="term" value="F:arginine binding"/>
    <property type="evidence" value="ECO:0007669"/>
    <property type="project" value="InterPro"/>
</dbReference>
<dbReference type="GO" id="GO:0003677">
    <property type="term" value="F:DNA binding"/>
    <property type="evidence" value="ECO:0007669"/>
    <property type="project" value="UniProtKB-KW"/>
</dbReference>
<dbReference type="GO" id="GO:0003700">
    <property type="term" value="F:DNA-binding transcription factor activity"/>
    <property type="evidence" value="ECO:0007669"/>
    <property type="project" value="UniProtKB-UniRule"/>
</dbReference>
<dbReference type="GO" id="GO:0006526">
    <property type="term" value="P:L-arginine biosynthetic process"/>
    <property type="evidence" value="ECO:0007669"/>
    <property type="project" value="UniProtKB-UniPathway"/>
</dbReference>
<dbReference type="GO" id="GO:0051259">
    <property type="term" value="P:protein complex oligomerization"/>
    <property type="evidence" value="ECO:0007669"/>
    <property type="project" value="InterPro"/>
</dbReference>
<dbReference type="GO" id="GO:1900079">
    <property type="term" value="P:regulation of arginine biosynthetic process"/>
    <property type="evidence" value="ECO:0007669"/>
    <property type="project" value="UniProtKB-UniRule"/>
</dbReference>
<dbReference type="FunFam" id="1.10.10.10:FF:000667">
    <property type="entry name" value="Arginine repressor"/>
    <property type="match status" value="1"/>
</dbReference>
<dbReference type="Gene3D" id="3.30.1360.40">
    <property type="match status" value="1"/>
</dbReference>
<dbReference type="Gene3D" id="1.10.10.10">
    <property type="entry name" value="Winged helix-like DNA-binding domain superfamily/Winged helix DNA-binding domain"/>
    <property type="match status" value="1"/>
</dbReference>
<dbReference type="HAMAP" id="MF_00173">
    <property type="entry name" value="Arg_repressor"/>
    <property type="match status" value="1"/>
</dbReference>
<dbReference type="InterPro" id="IPR001669">
    <property type="entry name" value="Arg_repress"/>
</dbReference>
<dbReference type="InterPro" id="IPR020899">
    <property type="entry name" value="Arg_repress_C"/>
</dbReference>
<dbReference type="InterPro" id="IPR036251">
    <property type="entry name" value="Arg_repress_C_sf"/>
</dbReference>
<dbReference type="InterPro" id="IPR020900">
    <property type="entry name" value="Arg_repress_DNA-bd"/>
</dbReference>
<dbReference type="InterPro" id="IPR036388">
    <property type="entry name" value="WH-like_DNA-bd_sf"/>
</dbReference>
<dbReference type="InterPro" id="IPR036390">
    <property type="entry name" value="WH_DNA-bd_sf"/>
</dbReference>
<dbReference type="NCBIfam" id="TIGR01529">
    <property type="entry name" value="argR_whole"/>
    <property type="match status" value="1"/>
</dbReference>
<dbReference type="NCBIfam" id="NF002880">
    <property type="entry name" value="PRK03341.1"/>
    <property type="match status" value="1"/>
</dbReference>
<dbReference type="PANTHER" id="PTHR34471">
    <property type="entry name" value="ARGININE REPRESSOR"/>
    <property type="match status" value="1"/>
</dbReference>
<dbReference type="PANTHER" id="PTHR34471:SF1">
    <property type="entry name" value="ARGININE REPRESSOR"/>
    <property type="match status" value="1"/>
</dbReference>
<dbReference type="Pfam" id="PF01316">
    <property type="entry name" value="Arg_repressor"/>
    <property type="match status" value="1"/>
</dbReference>
<dbReference type="Pfam" id="PF02863">
    <property type="entry name" value="Arg_repressor_C"/>
    <property type="match status" value="1"/>
</dbReference>
<dbReference type="PRINTS" id="PR01467">
    <property type="entry name" value="ARGREPRESSOR"/>
</dbReference>
<dbReference type="SUPFAM" id="SSF55252">
    <property type="entry name" value="C-terminal domain of arginine repressor"/>
    <property type="match status" value="1"/>
</dbReference>
<dbReference type="SUPFAM" id="SSF46785">
    <property type="entry name" value="Winged helix' DNA-binding domain"/>
    <property type="match status" value="1"/>
</dbReference>